<gene>
    <name evidence="1" type="primary">EIF3M</name>
    <name type="ORF">RCJMB04_20g2</name>
</gene>
<reference key="1">
    <citation type="journal article" date="2005" name="Genome Biol.">
        <title>Full-length cDNAs from chicken bursal lymphocytes to facilitate gene function analysis.</title>
        <authorList>
            <person name="Caldwell R.B."/>
            <person name="Kierzek A.M."/>
            <person name="Arakawa H."/>
            <person name="Bezzubov Y."/>
            <person name="Zaim J."/>
            <person name="Fiedler P."/>
            <person name="Kutter S."/>
            <person name="Blagodatski A."/>
            <person name="Kostovska D."/>
            <person name="Koter M."/>
            <person name="Plachy J."/>
            <person name="Carninci P."/>
            <person name="Hayashizaki Y."/>
            <person name="Buerstedde J.-M."/>
        </authorList>
    </citation>
    <scope>NUCLEOTIDE SEQUENCE [LARGE SCALE MRNA]</scope>
    <source>
        <strain>CB</strain>
        <tissue>Bursa of Fabricius</tissue>
    </source>
</reference>
<organism>
    <name type="scientific">Gallus gallus</name>
    <name type="common">Chicken</name>
    <dbReference type="NCBI Taxonomy" id="9031"/>
    <lineage>
        <taxon>Eukaryota</taxon>
        <taxon>Metazoa</taxon>
        <taxon>Chordata</taxon>
        <taxon>Craniata</taxon>
        <taxon>Vertebrata</taxon>
        <taxon>Euteleostomi</taxon>
        <taxon>Archelosauria</taxon>
        <taxon>Archosauria</taxon>
        <taxon>Dinosauria</taxon>
        <taxon>Saurischia</taxon>
        <taxon>Theropoda</taxon>
        <taxon>Coelurosauria</taxon>
        <taxon>Aves</taxon>
        <taxon>Neognathae</taxon>
        <taxon>Galloanserae</taxon>
        <taxon>Galliformes</taxon>
        <taxon>Phasianidae</taxon>
        <taxon>Phasianinae</taxon>
        <taxon>Gallus</taxon>
    </lineage>
</organism>
<accession>Q5ZJ64</accession>
<feature type="chain" id="PRO_0000308198" description="Eukaryotic translation initiation factor 3 subunit M">
    <location>
        <begin position="1"/>
        <end position="374"/>
    </location>
</feature>
<feature type="domain" description="PCI" evidence="2">
    <location>
        <begin position="180"/>
        <end position="339"/>
    </location>
</feature>
<proteinExistence type="evidence at transcript level"/>
<evidence type="ECO:0000255" key="1">
    <source>
        <dbReference type="HAMAP-Rule" id="MF_03012"/>
    </source>
</evidence>
<evidence type="ECO:0000255" key="2">
    <source>
        <dbReference type="PROSITE-ProRule" id="PRU01185"/>
    </source>
</evidence>
<dbReference type="EMBL" id="AJ720570">
    <property type="protein sequence ID" value="CAG32229.1"/>
    <property type="molecule type" value="mRNA"/>
</dbReference>
<dbReference type="RefSeq" id="NP_001006406.1">
    <property type="nucleotide sequence ID" value="NM_001006406.2"/>
</dbReference>
<dbReference type="SMR" id="Q5ZJ64"/>
<dbReference type="FunCoup" id="Q5ZJ64">
    <property type="interactions" value="3008"/>
</dbReference>
<dbReference type="STRING" id="9031.ENSGALP00000019755"/>
<dbReference type="PaxDb" id="9031-ENSGALP00000019755"/>
<dbReference type="Ensembl" id="ENSGALT00010057830.1">
    <property type="protein sequence ID" value="ENSGALP00010035095.1"/>
    <property type="gene ID" value="ENSGALG00010023714.1"/>
</dbReference>
<dbReference type="GeneID" id="421602"/>
<dbReference type="KEGG" id="gga:421602"/>
<dbReference type="CTD" id="10480"/>
<dbReference type="VEuPathDB" id="HostDB:geneid_421602"/>
<dbReference type="eggNOG" id="KOG2753">
    <property type="taxonomic scope" value="Eukaryota"/>
</dbReference>
<dbReference type="GeneTree" id="ENSGT00390000004456"/>
<dbReference type="HOGENOM" id="CLU_035254_1_0_1"/>
<dbReference type="InParanoid" id="Q5ZJ64"/>
<dbReference type="OMA" id="VCLKALW"/>
<dbReference type="OrthoDB" id="10267031at2759"/>
<dbReference type="PhylomeDB" id="Q5ZJ64"/>
<dbReference type="Reactome" id="R-GGA-72649">
    <property type="pathway name" value="Translation initiation complex formation"/>
</dbReference>
<dbReference type="Reactome" id="R-GGA-72689">
    <property type="pathway name" value="Formation of a pool of free 40S subunits"/>
</dbReference>
<dbReference type="Reactome" id="R-GGA-72695">
    <property type="pathway name" value="Formation of the ternary complex, and subsequently, the 43S complex"/>
</dbReference>
<dbReference type="Reactome" id="R-GGA-72702">
    <property type="pathway name" value="Ribosomal scanning and start codon recognition"/>
</dbReference>
<dbReference type="PRO" id="PR:Q5ZJ64"/>
<dbReference type="Proteomes" id="UP000000539">
    <property type="component" value="Chromosome 5"/>
</dbReference>
<dbReference type="Bgee" id="ENSGALG00000012109">
    <property type="expression patterns" value="Expressed in spermatid and 14 other cell types or tissues"/>
</dbReference>
<dbReference type="GO" id="GO:0016282">
    <property type="term" value="C:eukaryotic 43S preinitiation complex"/>
    <property type="evidence" value="ECO:0007669"/>
    <property type="project" value="UniProtKB-UniRule"/>
</dbReference>
<dbReference type="GO" id="GO:0033290">
    <property type="term" value="C:eukaryotic 48S preinitiation complex"/>
    <property type="evidence" value="ECO:0007669"/>
    <property type="project" value="UniProtKB-UniRule"/>
</dbReference>
<dbReference type="GO" id="GO:0005852">
    <property type="term" value="C:eukaryotic translation initiation factor 3 complex"/>
    <property type="evidence" value="ECO:0000318"/>
    <property type="project" value="GO_Central"/>
</dbReference>
<dbReference type="GO" id="GO:0071541">
    <property type="term" value="C:eukaryotic translation initiation factor 3 complex, eIF3m"/>
    <property type="evidence" value="ECO:0007669"/>
    <property type="project" value="UniProtKB-UniRule"/>
</dbReference>
<dbReference type="GO" id="GO:0003743">
    <property type="term" value="F:translation initiation factor activity"/>
    <property type="evidence" value="ECO:0007669"/>
    <property type="project" value="UniProtKB-UniRule"/>
</dbReference>
<dbReference type="GO" id="GO:0031369">
    <property type="term" value="F:translation initiation factor binding"/>
    <property type="evidence" value="ECO:0007669"/>
    <property type="project" value="Ensembl"/>
</dbReference>
<dbReference type="GO" id="GO:0002183">
    <property type="term" value="P:cytoplasmic translational initiation"/>
    <property type="evidence" value="ECO:0000318"/>
    <property type="project" value="GO_Central"/>
</dbReference>
<dbReference type="GO" id="GO:0001732">
    <property type="term" value="P:formation of cytoplasmic translation initiation complex"/>
    <property type="evidence" value="ECO:0007669"/>
    <property type="project" value="UniProtKB-UniRule"/>
</dbReference>
<dbReference type="HAMAP" id="MF_03012">
    <property type="entry name" value="eIF3m"/>
    <property type="match status" value="1"/>
</dbReference>
<dbReference type="InterPro" id="IPR016024">
    <property type="entry name" value="ARM-type_fold"/>
</dbReference>
<dbReference type="InterPro" id="IPR045237">
    <property type="entry name" value="COPS7/eIF3m"/>
</dbReference>
<dbReference type="InterPro" id="IPR027528">
    <property type="entry name" value="eIF3m"/>
</dbReference>
<dbReference type="InterPro" id="IPR040750">
    <property type="entry name" value="eIF3m_C_helix"/>
</dbReference>
<dbReference type="InterPro" id="IPR000717">
    <property type="entry name" value="PCI_dom"/>
</dbReference>
<dbReference type="InterPro" id="IPR036390">
    <property type="entry name" value="WH_DNA-bd_sf"/>
</dbReference>
<dbReference type="PANTHER" id="PTHR15350">
    <property type="entry name" value="COP9 SIGNALOSOME COMPLEX SUBUNIT 7/DENDRITIC CELL PROTEIN GA17"/>
    <property type="match status" value="1"/>
</dbReference>
<dbReference type="PANTHER" id="PTHR15350:SF2">
    <property type="entry name" value="EUKARYOTIC TRANSLATION INITIATION FACTOR 3 SUBUNIT M"/>
    <property type="match status" value="1"/>
</dbReference>
<dbReference type="Pfam" id="PF18005">
    <property type="entry name" value="eIF3m_C_helix"/>
    <property type="match status" value="1"/>
</dbReference>
<dbReference type="Pfam" id="PF01399">
    <property type="entry name" value="PCI"/>
    <property type="match status" value="1"/>
</dbReference>
<dbReference type="SMART" id="SM00088">
    <property type="entry name" value="PINT"/>
    <property type="match status" value="1"/>
</dbReference>
<dbReference type="SUPFAM" id="SSF48371">
    <property type="entry name" value="ARM repeat"/>
    <property type="match status" value="1"/>
</dbReference>
<dbReference type="SUPFAM" id="SSF46785">
    <property type="entry name" value="Winged helix' DNA-binding domain"/>
    <property type="match status" value="1"/>
</dbReference>
<dbReference type="PROSITE" id="PS50250">
    <property type="entry name" value="PCI"/>
    <property type="match status" value="1"/>
</dbReference>
<sequence length="374" mass="42591">MSVPAFIDITEEDQAAELRAYLKSKGAEISEENSEGGLHVDLAQIIEVCDVCLKEDDKDVESVMNSVVSLLLILEPDKQEALIESLCEKLVKFREGERPSLRLQLLSNLFHGMDKNTPVRYTVYCSLLKVASSCGAIQYIPTELDQVRKWISDWNLSTDKKHTLLRLLYDVLVDCKKSDTAAKVMVELLGSYTEDNASQARVDAHRCIVRALKDPNTFLFDHLLALKPVKFLEGELIHDLLTIFVSAKLVSYVKFYQNNKDFIDSLGLLHEQNMAKMRLLTFMGMAVENKEISFDTMQQELQIGADDVEAFVIDAVKTKMVYCKIDQTQRKVVVSHSTHRTFGKQQWQQLYDTLNTWKQNLNQVKNSLLSLSDT</sequence>
<comment type="function">
    <text evidence="1">Component of the eukaryotic translation initiation factor 3 (eIF-3) complex, which is involved in protein synthesis of a specialized repertoire of mRNAs and, together with other initiation factors, stimulates binding of mRNA and methionyl-tRNAi to the 40S ribosome. The eIF-3 complex specifically targets and initiates translation of a subset of mRNAs involved in cell proliferation.</text>
</comment>
<comment type="subunit">
    <text evidence="1">Component of the eukaryotic translation initiation factor 3 (eIF-3) complex, which is composed of 13 subunits: EIF3A, EIF3B, EIF3C, EIF3D, EIF3E, EIF3F, EIF3G, EIF3H, EIF3I, EIF3J, EIF3K, EIF3L and EIF3M.</text>
</comment>
<comment type="subcellular location">
    <subcellularLocation>
        <location evidence="1">Cytoplasm</location>
    </subcellularLocation>
</comment>
<comment type="similarity">
    <text evidence="1">Belongs to the eIF-3 subunit M family.</text>
</comment>
<keyword id="KW-0963">Cytoplasm</keyword>
<keyword id="KW-0396">Initiation factor</keyword>
<keyword id="KW-0648">Protein biosynthesis</keyword>
<keyword id="KW-1185">Reference proteome</keyword>
<name>EIF3M_CHICK</name>
<protein>
    <recommendedName>
        <fullName evidence="1">Eukaryotic translation initiation factor 3 subunit M</fullName>
        <shortName evidence="1">eIF3m</shortName>
    </recommendedName>
</protein>